<proteinExistence type="evidence at protein level"/>
<organism>
    <name type="scientific">Arabidopsis thaliana</name>
    <name type="common">Mouse-ear cress</name>
    <dbReference type="NCBI Taxonomy" id="3702"/>
    <lineage>
        <taxon>Eukaryota</taxon>
        <taxon>Viridiplantae</taxon>
        <taxon>Streptophyta</taxon>
        <taxon>Embryophyta</taxon>
        <taxon>Tracheophyta</taxon>
        <taxon>Spermatophyta</taxon>
        <taxon>Magnoliopsida</taxon>
        <taxon>eudicotyledons</taxon>
        <taxon>Gunneridae</taxon>
        <taxon>Pentapetalae</taxon>
        <taxon>rosids</taxon>
        <taxon>malvids</taxon>
        <taxon>Brassicales</taxon>
        <taxon>Brassicaceae</taxon>
        <taxon>Camelineae</taxon>
        <taxon>Arabidopsis</taxon>
    </lineage>
</organism>
<reference key="1">
    <citation type="journal article" date="1998" name="Plant Mol. Biol.">
        <title>The Arabidopsis Athb-8, -9 and -14 genes are members of a small gene family coding for highly related HD-ZIP proteins.</title>
        <authorList>
            <person name="Sessa G."/>
            <person name="Steindler C."/>
            <person name="Morelli G."/>
            <person name="Ruberti I."/>
        </authorList>
    </citation>
    <scope>NUCLEOTIDE SEQUENCE [GENOMIC DNA]</scope>
    <scope>FUNCTION</scope>
    <scope>SUBUNIT</scope>
    <source>
        <strain>cv. Columbia</strain>
    </source>
</reference>
<reference key="2">
    <citation type="submission" date="2002-04" db="EMBL/GenBank/DDBJ databases">
        <title>Nucleotide sequence of the Arabidopsis ATHB-9 mRNA, encoding an HD-Zip III protein related to ATHB-8.</title>
        <authorList>
            <person name="Ruzza V."/>
            <person name="Carabelli M."/>
            <person name="Ciarbelli A.R."/>
            <person name="Sessa G."/>
            <person name="Steindler C."/>
            <person name="Ruberti I."/>
        </authorList>
    </citation>
    <scope>NUCLEOTIDE SEQUENCE [MRNA]</scope>
    <source>
        <strain>cv. Columbia</strain>
    </source>
</reference>
<reference key="3">
    <citation type="journal article" date="2000" name="Nature">
        <title>Sequence and analysis of chromosome 1 of the plant Arabidopsis thaliana.</title>
        <authorList>
            <person name="Theologis A."/>
            <person name="Ecker J.R."/>
            <person name="Palm C.J."/>
            <person name="Federspiel N.A."/>
            <person name="Kaul S."/>
            <person name="White O."/>
            <person name="Alonso J."/>
            <person name="Altafi H."/>
            <person name="Araujo R."/>
            <person name="Bowman C.L."/>
            <person name="Brooks S.Y."/>
            <person name="Buehler E."/>
            <person name="Chan A."/>
            <person name="Chao Q."/>
            <person name="Chen H."/>
            <person name="Cheuk R.F."/>
            <person name="Chin C.W."/>
            <person name="Chung M.K."/>
            <person name="Conn L."/>
            <person name="Conway A.B."/>
            <person name="Conway A.R."/>
            <person name="Creasy T.H."/>
            <person name="Dewar K."/>
            <person name="Dunn P."/>
            <person name="Etgu P."/>
            <person name="Feldblyum T.V."/>
            <person name="Feng J.-D."/>
            <person name="Fong B."/>
            <person name="Fujii C.Y."/>
            <person name="Gill J.E."/>
            <person name="Goldsmith A.D."/>
            <person name="Haas B."/>
            <person name="Hansen N.F."/>
            <person name="Hughes B."/>
            <person name="Huizar L."/>
            <person name="Hunter J.L."/>
            <person name="Jenkins J."/>
            <person name="Johnson-Hopson C."/>
            <person name="Khan S."/>
            <person name="Khaykin E."/>
            <person name="Kim C.J."/>
            <person name="Koo H.L."/>
            <person name="Kremenetskaia I."/>
            <person name="Kurtz D.B."/>
            <person name="Kwan A."/>
            <person name="Lam B."/>
            <person name="Langin-Hooper S."/>
            <person name="Lee A."/>
            <person name="Lee J.M."/>
            <person name="Lenz C.A."/>
            <person name="Li J.H."/>
            <person name="Li Y.-P."/>
            <person name="Lin X."/>
            <person name="Liu S.X."/>
            <person name="Liu Z.A."/>
            <person name="Luros J.S."/>
            <person name="Maiti R."/>
            <person name="Marziali A."/>
            <person name="Militscher J."/>
            <person name="Miranda M."/>
            <person name="Nguyen M."/>
            <person name="Nierman W.C."/>
            <person name="Osborne B.I."/>
            <person name="Pai G."/>
            <person name="Peterson J."/>
            <person name="Pham P.K."/>
            <person name="Rizzo M."/>
            <person name="Rooney T."/>
            <person name="Rowley D."/>
            <person name="Sakano H."/>
            <person name="Salzberg S.L."/>
            <person name="Schwartz J.R."/>
            <person name="Shinn P."/>
            <person name="Southwick A.M."/>
            <person name="Sun H."/>
            <person name="Tallon L.J."/>
            <person name="Tambunga G."/>
            <person name="Toriumi M.J."/>
            <person name="Town C.D."/>
            <person name="Utterback T."/>
            <person name="Van Aken S."/>
            <person name="Vaysberg M."/>
            <person name="Vysotskaia V.S."/>
            <person name="Walker M."/>
            <person name="Wu D."/>
            <person name="Yu G."/>
            <person name="Fraser C.M."/>
            <person name="Venter J.C."/>
            <person name="Davis R.W."/>
        </authorList>
    </citation>
    <scope>NUCLEOTIDE SEQUENCE [LARGE SCALE GENOMIC DNA]</scope>
    <source>
        <strain>cv. Columbia</strain>
    </source>
</reference>
<reference key="4">
    <citation type="journal article" date="2017" name="Plant J.">
        <title>Araport11: a complete reannotation of the Arabidopsis thaliana reference genome.</title>
        <authorList>
            <person name="Cheng C.Y."/>
            <person name="Krishnakumar V."/>
            <person name="Chan A.P."/>
            <person name="Thibaud-Nissen F."/>
            <person name="Schobel S."/>
            <person name="Town C.D."/>
        </authorList>
    </citation>
    <scope>GENOME REANNOTATION</scope>
    <source>
        <strain>cv. Columbia</strain>
    </source>
</reference>
<reference key="5">
    <citation type="submission" date="2006-07" db="EMBL/GenBank/DDBJ databases">
        <title>Large-scale analysis of RIKEN Arabidopsis full-length (RAFL) cDNAs.</title>
        <authorList>
            <person name="Totoki Y."/>
            <person name="Seki M."/>
            <person name="Ishida J."/>
            <person name="Nakajima M."/>
            <person name="Enju A."/>
            <person name="Kamiya A."/>
            <person name="Narusaka M."/>
            <person name="Shin-i T."/>
            <person name="Nakagawa M."/>
            <person name="Sakamoto N."/>
            <person name="Oishi K."/>
            <person name="Kohara Y."/>
            <person name="Kobayashi M."/>
            <person name="Toyoda A."/>
            <person name="Sakaki Y."/>
            <person name="Sakurai T."/>
            <person name="Iida K."/>
            <person name="Akiyama K."/>
            <person name="Satou M."/>
            <person name="Toyoda T."/>
            <person name="Konagaya A."/>
            <person name="Carninci P."/>
            <person name="Kawai J."/>
            <person name="Hayashizaki Y."/>
            <person name="Shinozaki K."/>
        </authorList>
    </citation>
    <scope>NUCLEOTIDE SEQUENCE [LARGE SCALE MRNA]</scope>
    <source>
        <strain>cv. Columbia</strain>
    </source>
</reference>
<reference key="6">
    <citation type="journal article" date="2001" name="Nature">
        <title>Role of PHABULOSA and PHAVOLUTA in determining radial patterning in shoots.</title>
        <authorList>
            <person name="McConnell J.R."/>
            <person name="Emery J."/>
            <person name="Eshed Y."/>
            <person name="Bao N."/>
            <person name="Bowman J."/>
            <person name="Barton M.K."/>
        </authorList>
    </citation>
    <scope>FUNCTION</scope>
    <scope>MUTAGENESIS OF GLY-198</scope>
</reference>
<reference key="7">
    <citation type="journal article" date="2004" name="Nature">
        <title>Spatially restricted microRNA directs leaf polarity through ARGONAUTE1.</title>
        <authorList>
            <person name="Kidner C.A."/>
            <person name="Martienssen R.A."/>
        </authorList>
    </citation>
    <scope>INDUCTION</scope>
</reference>
<reference key="8">
    <citation type="journal article" date="2005" name="Development">
        <title>Regulation of Arabidopsis shoot apical meristem and lateral organ formation by microRNA miR166g and its AtHD-ZIP target genes.</title>
        <authorList>
            <person name="Williams L."/>
            <person name="Grigg S.P."/>
            <person name="Xie M."/>
            <person name="Christensen S."/>
            <person name="Fletcher J.C."/>
        </authorList>
    </citation>
    <scope>INDUCTION</scope>
</reference>
<reference key="9">
    <citation type="journal article" date="2005" name="Plant Cell">
        <title>Class III homeodomain-leucine zipper gene family members have overlapping, antagonistic, and distinct roles in Arabidopsis development.</title>
        <authorList>
            <person name="Prigge M.J."/>
            <person name="Otsuga D."/>
            <person name="Alonso J.M."/>
            <person name="Ecker J.R."/>
            <person name="Drews G.N."/>
            <person name="Clark S.E."/>
        </authorList>
    </citation>
    <scope>FUNCTION</scope>
</reference>
<reference key="10">
    <citation type="journal article" date="2006" name="Evol. Dev.">
        <title>Evolution of the class III HD-Zip gene family in land plants.</title>
        <authorList>
            <person name="Prigge M.J."/>
            <person name="Clark S.E."/>
        </authorList>
    </citation>
    <scope>GENE FAMILY</scope>
</reference>
<reference key="11">
    <citation type="journal article" date="2007" name="Arch. Biochem. Biophys.">
        <title>Conserved homeodomain cysteines confer redox sensitivity and influence the DNA binding properties of plant class III HD-Zip proteins.</title>
        <authorList>
            <person name="Comelli R.N."/>
            <person name="Gonzalez D.H."/>
        </authorList>
    </citation>
    <scope>FUNCTION</scope>
    <scope>MUTAGENESIS OF CYS-40; CYS-55; CYS-59 AND CYS-75</scope>
</reference>
<reference key="12">
    <citation type="journal article" date="2007" name="Development">
        <title>The AP2 transcription factors DORNROSCHEN and DORNROSCHEN-LIKE redundantly control Arabidopsis embryo patterning via interaction with PHAVOLUTA.</title>
        <authorList>
            <person name="Chandler J.W."/>
            <person name="Cole M."/>
            <person name="Flier A."/>
            <person name="Grewe B."/>
            <person name="Werr W."/>
        </authorList>
    </citation>
    <scope>INTERACTION WITH ESR1 AND ESR2</scope>
</reference>
<reference key="13">
    <citation type="journal article" date="2007" name="Plant Cell Physiol.">
        <title>Overexpression of miR165 affects apical meristem formation, organ polarity establishment and vascular development in Arabidopsis.</title>
        <authorList>
            <person name="Zhou G.-K."/>
            <person name="Kubo M."/>
            <person name="Zhong R."/>
            <person name="Demura T."/>
            <person name="Ye Z.-H."/>
        </authorList>
    </citation>
    <scope>INDUCTION</scope>
</reference>
<reference key="14">
    <citation type="journal article" date="2008" name="Plant Cell">
        <title>HD-ZIP III activity is modulated by competitive inhibitors via a feedback loop in Arabidopsis shoot apical meristem development.</title>
        <authorList>
            <person name="Kim Y.S."/>
            <person name="Kim S.G."/>
            <person name="Lee M."/>
            <person name="Lee I."/>
            <person name="Park H.Y."/>
            <person name="Seo P.J."/>
            <person name="Jung J.H."/>
            <person name="Kwon E.J."/>
            <person name="Suh S.W."/>
            <person name="Paek K.H."/>
            <person name="Park C.M."/>
        </authorList>
    </citation>
    <scope>INTERACTION WITH ZPR3</scope>
</reference>
<reference key="15">
    <citation type="journal article" date="2014" name="Mol. Phylogenet. Evol.">
        <title>Origin of a novel regulatory module by duplication and degeneration of an ancient plant transcription factor.</title>
        <authorList>
            <person name="Floyd S.K."/>
            <person name="Ryan J.G."/>
            <person name="Conway S.J."/>
            <person name="Brenner E."/>
            <person name="Burris K.P."/>
            <person name="Burris J.N."/>
            <person name="Chen T."/>
            <person name="Edger P.P."/>
            <person name="Graham S.W."/>
            <person name="Leebens-Mack J.H."/>
            <person name="Pires J.C."/>
            <person name="Rothfels C.J."/>
            <person name="Sigel E.M."/>
            <person name="Stevenson D.W."/>
            <person name="Neal Stewart C. Jr."/>
            <person name="Wong G.K."/>
            <person name="Bowman J.L."/>
        </authorList>
    </citation>
    <scope>GENE FAMILY</scope>
</reference>
<feature type="chain" id="PRO_0000331659" description="Homeobox-leucine zipper protein ATHB-9">
    <location>
        <begin position="1"/>
        <end position="841"/>
    </location>
</feature>
<feature type="domain" description="START" evidence="3">
    <location>
        <begin position="160"/>
        <end position="388"/>
    </location>
</feature>
<feature type="DNA-binding region" description="Homeobox" evidence="2">
    <location>
        <begin position="18"/>
        <end position="81"/>
    </location>
</feature>
<feature type="region of interest" description="Disordered" evidence="4">
    <location>
        <begin position="1"/>
        <end position="21"/>
    </location>
</feature>
<feature type="region of interest" description="Disordered" evidence="4">
    <location>
        <begin position="140"/>
        <end position="162"/>
    </location>
</feature>
<feature type="region of interest" description="Disordered" evidence="4">
    <location>
        <begin position="602"/>
        <end position="630"/>
    </location>
</feature>
<feature type="coiled-coil region" evidence="1">
    <location>
        <begin position="85"/>
        <end position="118"/>
    </location>
</feature>
<feature type="compositionally biased region" description="Basic and acidic residues" evidence="4">
    <location>
        <begin position="1"/>
        <end position="18"/>
    </location>
</feature>
<feature type="compositionally biased region" description="Low complexity" evidence="4">
    <location>
        <begin position="145"/>
        <end position="155"/>
    </location>
</feature>
<feature type="compositionally biased region" description="Polar residues" evidence="4">
    <location>
        <begin position="603"/>
        <end position="614"/>
    </location>
</feature>
<feature type="mutagenesis site" description="Decrease in DNA-binding efficiency." evidence="11">
    <original>C</original>
    <variation>A</variation>
    <location>
        <position position="40"/>
    </location>
</feature>
<feature type="mutagenesis site" description="No effect on DNA-binding." evidence="11">
    <original>C</original>
    <variation>A</variation>
    <location>
        <position position="55"/>
    </location>
</feature>
<feature type="mutagenesis site" description="No effect on DNA-binding." evidence="11">
    <original>C</original>
    <variation>A</variation>
    <location>
        <position position="59"/>
    </location>
</feature>
<feature type="mutagenesis site" description="Decrease in DNA-binding efficiency." evidence="11">
    <original>C</original>
    <variation>A</variation>
    <location>
        <position position="75"/>
    </location>
</feature>
<feature type="mutagenesis site" description="In phv-1d, phv-2d, phv-3d and phv-4d; constitutively active. Transformation of abaxial leaf fates into adaxial leaf fates." evidence="5">
    <original>G</original>
    <variation>D</variation>
    <location>
        <position position="198"/>
    </location>
</feature>
<dbReference type="EMBL" id="Y10922">
    <property type="protein sequence ID" value="CAA71854.1"/>
    <property type="molecule type" value="Genomic_DNA"/>
</dbReference>
<dbReference type="EMBL" id="AJ440967">
    <property type="protein sequence ID" value="CAD29544.1"/>
    <property type="molecule type" value="mRNA"/>
</dbReference>
<dbReference type="EMBL" id="AC009917">
    <property type="protein sequence ID" value="AAF19752.1"/>
    <property type="status" value="ALT_INIT"/>
    <property type="molecule type" value="Genomic_DNA"/>
</dbReference>
<dbReference type="EMBL" id="CP002684">
    <property type="protein sequence ID" value="AEE31232.1"/>
    <property type="molecule type" value="Genomic_DNA"/>
</dbReference>
<dbReference type="EMBL" id="AK221046">
    <property type="protein sequence ID" value="BAD94803.1"/>
    <property type="molecule type" value="mRNA"/>
</dbReference>
<dbReference type="EMBL" id="AK226570">
    <property type="protein sequence ID" value="BAE98697.1"/>
    <property type="molecule type" value="mRNA"/>
</dbReference>
<dbReference type="PIR" id="H86429">
    <property type="entry name" value="H86429"/>
</dbReference>
<dbReference type="RefSeq" id="NP_174337.1">
    <property type="nucleotide sequence ID" value="NM_102785.5"/>
</dbReference>
<dbReference type="SMR" id="O04292"/>
<dbReference type="BioGRID" id="25163">
    <property type="interactions" value="54"/>
</dbReference>
<dbReference type="FunCoup" id="O04292">
    <property type="interactions" value="1179"/>
</dbReference>
<dbReference type="IntAct" id="O04292">
    <property type="interactions" value="62"/>
</dbReference>
<dbReference type="STRING" id="3702.O04292"/>
<dbReference type="PaxDb" id="3702-AT1G30490.1"/>
<dbReference type="ProteomicsDB" id="246720"/>
<dbReference type="EnsemblPlants" id="AT1G30490.1">
    <property type="protein sequence ID" value="AT1G30490.1"/>
    <property type="gene ID" value="AT1G30490"/>
</dbReference>
<dbReference type="GeneID" id="839928"/>
<dbReference type="Gramene" id="AT1G30490.1">
    <property type="protein sequence ID" value="AT1G30490.1"/>
    <property type="gene ID" value="AT1G30490"/>
</dbReference>
<dbReference type="KEGG" id="ath:AT1G30490"/>
<dbReference type="Araport" id="AT1G30490"/>
<dbReference type="TAIR" id="AT1G30490">
    <property type="gene designation" value="PHV"/>
</dbReference>
<dbReference type="eggNOG" id="ENOG502QPKR">
    <property type="taxonomic scope" value="Eukaryota"/>
</dbReference>
<dbReference type="HOGENOM" id="CLU_012517_0_0_1"/>
<dbReference type="InParanoid" id="O04292"/>
<dbReference type="OMA" id="KHRIHTA"/>
<dbReference type="PhylomeDB" id="O04292"/>
<dbReference type="PRO" id="PR:O04292"/>
<dbReference type="Proteomes" id="UP000006548">
    <property type="component" value="Chromosome 1"/>
</dbReference>
<dbReference type="ExpressionAtlas" id="O04292">
    <property type="expression patterns" value="baseline and differential"/>
</dbReference>
<dbReference type="GO" id="GO:0005634">
    <property type="term" value="C:nucleus"/>
    <property type="evidence" value="ECO:0007669"/>
    <property type="project" value="UniProtKB-SubCell"/>
</dbReference>
<dbReference type="GO" id="GO:0003677">
    <property type="term" value="F:DNA binding"/>
    <property type="evidence" value="ECO:0000250"/>
    <property type="project" value="TAIR"/>
</dbReference>
<dbReference type="GO" id="GO:0003700">
    <property type="term" value="F:DNA-binding transcription factor activity"/>
    <property type="evidence" value="ECO:0000250"/>
    <property type="project" value="TAIR"/>
</dbReference>
<dbReference type="GO" id="GO:0008289">
    <property type="term" value="F:lipid binding"/>
    <property type="evidence" value="ECO:0007669"/>
    <property type="project" value="InterPro"/>
</dbReference>
<dbReference type="GO" id="GO:0000976">
    <property type="term" value="F:transcription cis-regulatory region binding"/>
    <property type="evidence" value="ECO:0000353"/>
    <property type="project" value="TAIR"/>
</dbReference>
<dbReference type="GO" id="GO:0009943">
    <property type="term" value="P:adaxial/abaxial axis specification"/>
    <property type="evidence" value="ECO:0000315"/>
    <property type="project" value="TAIR"/>
</dbReference>
<dbReference type="GO" id="GO:0030154">
    <property type="term" value="P:cell differentiation"/>
    <property type="evidence" value="ECO:0007669"/>
    <property type="project" value="UniProtKB-KW"/>
</dbReference>
<dbReference type="GO" id="GO:0009855">
    <property type="term" value="P:determination of bilateral symmetry"/>
    <property type="evidence" value="ECO:0000315"/>
    <property type="project" value="TAIR"/>
</dbReference>
<dbReference type="GO" id="GO:0009880">
    <property type="term" value="P:embryonic pattern specification"/>
    <property type="evidence" value="ECO:0000316"/>
    <property type="project" value="TAIR"/>
</dbReference>
<dbReference type="GO" id="GO:0080060">
    <property type="term" value="P:integument development"/>
    <property type="evidence" value="ECO:0000316"/>
    <property type="project" value="TAIR"/>
</dbReference>
<dbReference type="GO" id="GO:0010014">
    <property type="term" value="P:meristem initiation"/>
    <property type="evidence" value="ECO:0000315"/>
    <property type="project" value="TAIR"/>
</dbReference>
<dbReference type="GO" id="GO:0009944">
    <property type="term" value="P:polarity specification of adaxial/abaxial axis"/>
    <property type="evidence" value="ECO:0000315"/>
    <property type="project" value="TAIR"/>
</dbReference>
<dbReference type="GO" id="GO:0010072">
    <property type="term" value="P:primary shoot apical meristem specification"/>
    <property type="evidence" value="ECO:0000315"/>
    <property type="project" value="TAIR"/>
</dbReference>
<dbReference type="CDD" id="cd14686">
    <property type="entry name" value="bZIP"/>
    <property type="match status" value="1"/>
</dbReference>
<dbReference type="CDD" id="cd00086">
    <property type="entry name" value="homeodomain"/>
    <property type="match status" value="1"/>
</dbReference>
<dbReference type="CDD" id="cd08875">
    <property type="entry name" value="START_ArGLABRA2_like"/>
    <property type="match status" value="1"/>
</dbReference>
<dbReference type="FunFam" id="3.30.530.20:FF:000020">
    <property type="entry name" value="homeobox-leucine zipper protein ATHB-15"/>
    <property type="match status" value="1"/>
</dbReference>
<dbReference type="FunFam" id="1.10.10.60:FF:000197">
    <property type="entry name" value="Homeobox-leucine zipper protein REVOLUTA"/>
    <property type="match status" value="1"/>
</dbReference>
<dbReference type="Gene3D" id="3.30.530.20">
    <property type="match status" value="1"/>
</dbReference>
<dbReference type="Gene3D" id="1.10.10.60">
    <property type="entry name" value="Homeodomain-like"/>
    <property type="match status" value="1"/>
</dbReference>
<dbReference type="InterPro" id="IPR001356">
    <property type="entry name" value="HD"/>
</dbReference>
<dbReference type="InterPro" id="IPR044830">
    <property type="entry name" value="HD-Zip_III"/>
</dbReference>
<dbReference type="InterPro" id="IPR009057">
    <property type="entry name" value="Homeodomain-like_sf"/>
</dbReference>
<dbReference type="InterPro" id="IPR013978">
    <property type="entry name" value="MEKHLA"/>
</dbReference>
<dbReference type="InterPro" id="IPR023393">
    <property type="entry name" value="START-like_dom_sf"/>
</dbReference>
<dbReference type="InterPro" id="IPR002913">
    <property type="entry name" value="START_lipid-bd_dom"/>
</dbReference>
<dbReference type="PANTHER" id="PTHR45950">
    <property type="entry name" value="HOMEOBOX-LEUCINE ZIPPER PROTEIN ATHB-14"/>
    <property type="match status" value="1"/>
</dbReference>
<dbReference type="PANTHER" id="PTHR45950:SF9">
    <property type="entry name" value="HOMEOBOX-LEUCINE ZIPPER PROTEIN ATHB-9"/>
    <property type="match status" value="1"/>
</dbReference>
<dbReference type="Pfam" id="PF00046">
    <property type="entry name" value="Homeodomain"/>
    <property type="match status" value="1"/>
</dbReference>
<dbReference type="Pfam" id="PF08670">
    <property type="entry name" value="MEKHLA"/>
    <property type="match status" value="1"/>
</dbReference>
<dbReference type="Pfam" id="PF01852">
    <property type="entry name" value="START"/>
    <property type="match status" value="1"/>
</dbReference>
<dbReference type="SMART" id="SM00389">
    <property type="entry name" value="HOX"/>
    <property type="match status" value="1"/>
</dbReference>
<dbReference type="SMART" id="SM00234">
    <property type="entry name" value="START"/>
    <property type="match status" value="1"/>
</dbReference>
<dbReference type="SUPFAM" id="SSF55961">
    <property type="entry name" value="Bet v1-like"/>
    <property type="match status" value="1"/>
</dbReference>
<dbReference type="SUPFAM" id="SSF46689">
    <property type="entry name" value="Homeodomain-like"/>
    <property type="match status" value="1"/>
</dbReference>
<dbReference type="PROSITE" id="PS50071">
    <property type="entry name" value="HOMEOBOX_2"/>
    <property type="match status" value="1"/>
</dbReference>
<dbReference type="PROSITE" id="PS50848">
    <property type="entry name" value="START"/>
    <property type="match status" value="1"/>
</dbReference>
<accession>O04292</accession>
<accession>Q56ZC0</accession>
<accession>Q9S9Q0</accession>
<name>ATBH9_ARATH</name>
<protein>
    <recommendedName>
        <fullName>Homeobox-leucine zipper protein ATHB-9</fullName>
    </recommendedName>
    <alternativeName>
        <fullName>HD-ZIP protein ATHB-9</fullName>
    </alternativeName>
    <alternativeName>
        <fullName>Homeodomain transcription factor ATHB-9</fullName>
    </alternativeName>
    <alternativeName>
        <fullName>Protein PHAVOLUTA</fullName>
    </alternativeName>
</protein>
<comment type="function">
    <text evidence="5 7 11 13">Probable transcription factor involved in the determination of adaxial-abaxial polarity in ovule primordium. Specifies adaxial leaf fates. Binds to the DNA sequence 5'-GTAAT[GC]ATTAC-3'.</text>
</comment>
<comment type="subunit">
    <text evidence="10 12 13">Binds DNA as homodimer (PubMed:9747806). Interacts with ESR1 and ESR2 (PubMed:17376809). Interacts with ZPR3 (PubMed:18408069).</text>
</comment>
<comment type="interaction">
    <interactant intactId="EBI-1536772">
        <id>O04292</id>
    </interactant>
    <interactant intactId="EBI-15195737">
        <id>F4I9R1</id>
        <label>At1g58110</label>
    </interactant>
    <organismsDiffer>false</organismsDiffer>
    <experiments>3</experiments>
</comment>
<comment type="interaction">
    <interactant intactId="EBI-1536772">
        <id>O04292</id>
    </interactant>
    <interactant intactId="EBI-15192535">
        <id>F4JI72</id>
        <label>At4g03250</label>
    </interactant>
    <organismsDiffer>false</organismsDiffer>
    <experiments>5</experiments>
</comment>
<comment type="interaction">
    <interactant intactId="EBI-1536772">
        <id>O04292</id>
    </interactant>
    <interactant intactId="EBI-15192259">
        <id>P92953</id>
        <label>ATHB-4</label>
    </interactant>
    <organismsDiffer>false</organismsDiffer>
    <experiments>4</experiments>
</comment>
<comment type="interaction">
    <interactant intactId="EBI-1536772">
        <id>O04292</id>
    </interactant>
    <interactant intactId="EBI-3133192">
        <id>Q94JL3</id>
        <label>BHLH112</label>
    </interactant>
    <organismsDiffer>false</organismsDiffer>
    <experiments>3</experiments>
</comment>
<comment type="interaction">
    <interactant intactId="EBI-1536772">
        <id>O04292</id>
    </interactant>
    <interactant intactId="EBI-617095">
        <id>Q9LEZ3</id>
        <label>BIM1</label>
    </interactant>
    <organismsDiffer>false</organismsDiffer>
    <experiments>5</experiments>
</comment>
<comment type="interaction">
    <interactant intactId="EBI-1536772">
        <id>O04292</id>
    </interactant>
    <interactant intactId="EBI-1536756">
        <id>Q9SAD4</id>
        <label>ESR1</label>
    </interactant>
    <organismsDiffer>false</organismsDiffer>
    <experiments>5</experiments>
</comment>
<comment type="interaction">
    <interactant intactId="EBI-1536772">
        <id>O04292</id>
    </interactant>
    <interactant intactId="EBI-1536925">
        <id>Q9FYK5</id>
        <label>ESR2</label>
    </interactant>
    <organismsDiffer>false</organismsDiffer>
    <experiments>2</experiments>
</comment>
<comment type="interaction">
    <interactant intactId="EBI-1536772">
        <id>O04292</id>
    </interactant>
    <interactant intactId="EBI-15195911">
        <id>P46600</id>
        <label>HAT1</label>
    </interactant>
    <organismsDiffer>false</organismsDiffer>
    <experiments>3</experiments>
</comment>
<comment type="interaction">
    <interactant intactId="EBI-1536772">
        <id>O04292</id>
    </interactant>
    <interactant intactId="EBI-4450405">
        <id>P46602</id>
        <label>HAT3</label>
    </interactant>
    <organismsDiffer>false</organismsDiffer>
    <experiments>5</experiments>
</comment>
<comment type="interaction">
    <interactant intactId="EBI-1536772">
        <id>O04292</id>
    </interactant>
    <interactant intactId="EBI-3947418">
        <id>Q8LAL2</id>
        <label>IAA26</label>
    </interactant>
    <organismsDiffer>false</organismsDiffer>
    <experiments>4</experiments>
</comment>
<comment type="interaction">
    <interactant intactId="EBI-1536772">
        <id>O04292</id>
    </interactant>
    <interactant intactId="EBI-15205274">
        <id>Q9XGX0</id>
        <label>SHI</label>
    </interactant>
    <organismsDiffer>false</organismsDiffer>
    <experiments>3</experiments>
</comment>
<comment type="interaction">
    <interactant intactId="EBI-1536772">
        <id>O04292</id>
    </interactant>
    <interactant intactId="EBI-3133327">
        <id>O82277</id>
        <label>TCP10</label>
    </interactant>
    <organismsDiffer>false</organismsDiffer>
    <experiments>3</experiments>
</comment>
<comment type="interaction">
    <interactant intactId="EBI-1536772">
        <id>O04292</id>
    </interactant>
    <interactant intactId="EBI-4424877">
        <id>Q9S7W5</id>
        <label>TCP13</label>
    </interactant>
    <organismsDiffer>false</organismsDiffer>
    <experiments>3</experiments>
</comment>
<comment type="interaction">
    <interactant intactId="EBI-1536772">
        <id>O04292</id>
    </interactant>
    <interactant intactId="EBI-15192325">
        <id>Q8LPR5</id>
        <label>TCP4</label>
    </interactant>
    <organismsDiffer>false</organismsDiffer>
    <experiments>3</experiments>
</comment>
<comment type="interaction">
    <interactant intactId="EBI-1536772">
        <id>O04292</id>
    </interactant>
    <interactant intactId="EBI-15192251">
        <id>Q9FME3</id>
        <label>TCP5</label>
    </interactant>
    <organismsDiffer>false</organismsDiffer>
    <experiments>4</experiments>
</comment>
<comment type="interaction">
    <interactant intactId="EBI-1536772">
        <id>O04292</id>
    </interactant>
    <interactant intactId="EBI-3134124">
        <id>Q9C518</id>
        <label>TCP8</label>
    </interactant>
    <organismsDiffer>false</organismsDiffer>
    <experiments>4</experiments>
</comment>
<comment type="interaction">
    <interactant intactId="EBI-1536772">
        <id>O04292</id>
    </interactant>
    <interactant intactId="EBI-4426557">
        <id>Q84MB2</id>
        <label>TIFY8</label>
    </interactant>
    <organismsDiffer>false</organismsDiffer>
    <experiments>3</experiments>
</comment>
<comment type="interaction">
    <interactant intactId="EBI-1536772">
        <id>O04292</id>
    </interactant>
    <interactant intactId="EBI-4424568">
        <id>Q9LVG2</id>
        <label>TOE2</label>
    </interactant>
    <organismsDiffer>false</organismsDiffer>
    <experiments>3</experiments>
</comment>
<comment type="subcellular location">
    <subcellularLocation>
        <location evidence="14">Nucleus</location>
    </subcellularLocation>
</comment>
<comment type="induction">
    <text evidence="6 8 9">By auxin. Repressed by miR165 and miR166.</text>
</comment>
<comment type="similarity">
    <text evidence="14">Belongs to the HD-ZIP homeobox family. Class III subfamily.</text>
</comment>
<comment type="sequence caution" evidence="14">
    <conflict type="erroneous initiation">
        <sequence resource="EMBL-CDS" id="AAF19752"/>
    </conflict>
    <text>Truncated N-terminus.</text>
</comment>
<evidence type="ECO:0000255" key="1"/>
<evidence type="ECO:0000255" key="2">
    <source>
        <dbReference type="PROSITE-ProRule" id="PRU00108"/>
    </source>
</evidence>
<evidence type="ECO:0000255" key="3">
    <source>
        <dbReference type="PROSITE-ProRule" id="PRU00197"/>
    </source>
</evidence>
<evidence type="ECO:0000256" key="4">
    <source>
        <dbReference type="SAM" id="MobiDB-lite"/>
    </source>
</evidence>
<evidence type="ECO:0000269" key="5">
    <source>
    </source>
</evidence>
<evidence type="ECO:0000269" key="6">
    <source>
    </source>
</evidence>
<evidence type="ECO:0000269" key="7">
    <source>
    </source>
</evidence>
<evidence type="ECO:0000269" key="8">
    <source>
    </source>
</evidence>
<evidence type="ECO:0000269" key="9">
    <source>
    </source>
</evidence>
<evidence type="ECO:0000269" key="10">
    <source>
    </source>
</evidence>
<evidence type="ECO:0000269" key="11">
    <source>
    </source>
</evidence>
<evidence type="ECO:0000269" key="12">
    <source>
    </source>
</evidence>
<evidence type="ECO:0000269" key="13">
    <source>
    </source>
</evidence>
<evidence type="ECO:0000305" key="14"/>
<sequence>MMAHHSMDDRDSPDKGFDSGKYVRYTPEQVEALERVYAECPKPSSLRRQQLIRECPILCNIEPRQIKVWFQNRRCREKQRKESARLQTVNRKLSAMNKLLMEENDRLQKQVSNLVYENGFMKHRIHTASGTTTDNSCESVVVSGQQRQQQNPTHQHPQRDVNNPANLLSIAEETLAEFLCKATGTAVDWVQMIGMKPGPDSIGIVAVSRNCSGIAARACGLVSLEPMKVAEILKDRPSWFRDCRCVETLNVIPTGNGGTIELVNTQIYAPTTLAAARDFWTLRYSTSLEDGSYVVCERSLTSATGGPNGPLSSSFVRAKMLSSGFLIRPCDGGGSIIHIVDHVDLDVSSVPEVLRPLYESSKILAQKMTVAALRHVRQIAQETSGEVQYSGGRQPAVLRTFSQRLCRGFNDAVNGFVDDGWSPMSSDGGEDITIMINSSSAKFAGSQYGSSFLPSFGSGVLCAKASMLLQNVPPLVLIRFLREHRAEWADYGVDAYSAASLRATPYAVPCVRTGGFPSNQVILPLAQTLEHEEFLEVVRLGGHAYSPEDMGLSRDMYLLQLCSGVDENVVGGCAQLVFAPIDESFADDAPLLPSGFRVIPLDQKTNPNDHQSASRTRDLASSLDGSTKTDSETNSRLVLTIAFQFTFDNHSRDNVATMARQYVRNVVGSIQRVALAITPRPGSMQLPTSPEALTLVRWITRSYSIHTGADLFGADSQSCGGDTLLKQLWDHSDAILCCSLKTNASPVFTFANQAGLDMLETTLVALQDIMLDKTLDDSGRRALCSEFAKIMQQGYANLPAGICVSSMGRPVSYEQATVWKVVDDNESNHCLAFTLVSWSFV</sequence>
<gene>
    <name type="primary">ATHB-9</name>
    <name type="synonym">HB9</name>
    <name type="synonym">PHV</name>
    <name type="ordered locus">At1g30490</name>
    <name type="ORF">F26G16.11</name>
</gene>
<keyword id="KW-0175">Coiled coil</keyword>
<keyword id="KW-0221">Differentiation</keyword>
<keyword id="KW-0238">DNA-binding</keyword>
<keyword id="KW-0371">Homeobox</keyword>
<keyword id="KW-0539">Nucleus</keyword>
<keyword id="KW-1185">Reference proteome</keyword>
<keyword id="KW-0804">Transcription</keyword>
<keyword id="KW-0805">Transcription regulation</keyword>